<accession>B8H6E1</accession>
<reference key="1">
    <citation type="journal article" date="2010" name="J. Bacteriol.">
        <title>The genetic basis of laboratory adaptation in Caulobacter crescentus.</title>
        <authorList>
            <person name="Marks M.E."/>
            <person name="Castro-Rojas C.M."/>
            <person name="Teiling C."/>
            <person name="Du L."/>
            <person name="Kapatral V."/>
            <person name="Walunas T.L."/>
            <person name="Crosson S."/>
        </authorList>
    </citation>
    <scope>NUCLEOTIDE SEQUENCE [LARGE SCALE GENOMIC DNA]</scope>
    <source>
        <strain>NA1000 / CB15N</strain>
    </source>
</reference>
<gene>
    <name type="ordered locus">CCNA_03737</name>
</gene>
<organism>
    <name type="scientific">Caulobacter vibrioides (strain NA1000 / CB15N)</name>
    <name type="common">Caulobacter crescentus</name>
    <dbReference type="NCBI Taxonomy" id="565050"/>
    <lineage>
        <taxon>Bacteria</taxon>
        <taxon>Pseudomonadati</taxon>
        <taxon>Pseudomonadota</taxon>
        <taxon>Alphaproteobacteria</taxon>
        <taxon>Caulobacterales</taxon>
        <taxon>Caulobacteraceae</taxon>
        <taxon>Caulobacter</taxon>
    </lineage>
</organism>
<dbReference type="EMBL" id="CP001340">
    <property type="protein sequence ID" value="ACL97202.1"/>
    <property type="molecule type" value="Genomic_DNA"/>
</dbReference>
<dbReference type="RefSeq" id="WP_010921449.1">
    <property type="nucleotide sequence ID" value="NC_011916.1"/>
</dbReference>
<dbReference type="RefSeq" id="YP_002519110.1">
    <property type="nucleotide sequence ID" value="NC_011916.1"/>
</dbReference>
<dbReference type="SMR" id="B8H6E1"/>
<dbReference type="GeneID" id="7331934"/>
<dbReference type="KEGG" id="ccs:CCNA_03737"/>
<dbReference type="PATRIC" id="fig|565050.3.peg.3643"/>
<dbReference type="HOGENOM" id="CLU_130694_3_1_5"/>
<dbReference type="OrthoDB" id="9801972at2"/>
<dbReference type="PhylomeDB" id="B8H6E1"/>
<dbReference type="Proteomes" id="UP000001364">
    <property type="component" value="Chromosome"/>
</dbReference>
<dbReference type="Gene3D" id="3.30.1200.10">
    <property type="entry name" value="YggU-like"/>
    <property type="match status" value="1"/>
</dbReference>
<dbReference type="HAMAP" id="MF_00634">
    <property type="entry name" value="UPF0235"/>
    <property type="match status" value="1"/>
</dbReference>
<dbReference type="InterPro" id="IPR003746">
    <property type="entry name" value="DUF167"/>
</dbReference>
<dbReference type="InterPro" id="IPR036591">
    <property type="entry name" value="YggU-like_sf"/>
</dbReference>
<dbReference type="NCBIfam" id="TIGR00251">
    <property type="entry name" value="DUF167 family protein"/>
    <property type="match status" value="1"/>
</dbReference>
<dbReference type="Pfam" id="PF02594">
    <property type="entry name" value="DUF167"/>
    <property type="match status" value="1"/>
</dbReference>
<dbReference type="SMART" id="SM01152">
    <property type="entry name" value="DUF167"/>
    <property type="match status" value="1"/>
</dbReference>
<dbReference type="SUPFAM" id="SSF69786">
    <property type="entry name" value="YggU-like"/>
    <property type="match status" value="1"/>
</dbReference>
<evidence type="ECO:0000255" key="1">
    <source>
        <dbReference type="HAMAP-Rule" id="MF_00634"/>
    </source>
</evidence>
<keyword id="KW-1185">Reference proteome</keyword>
<sequence length="98" mass="10201">MADGVAVTLVVRLTPRGGRDAAEGWALDADGRLYLKVRVASPPVEGAANAALIAFLAKTLKIPRSAVRLAAGETARLKRLELEGVDPADVARAFGPPN</sequence>
<name>Y3737_CAUVN</name>
<feature type="chain" id="PRO_1000147339" description="UPF0235 protein CCNA_03737">
    <location>
        <begin position="1"/>
        <end position="98"/>
    </location>
</feature>
<proteinExistence type="inferred from homology"/>
<protein>
    <recommendedName>
        <fullName evidence="1">UPF0235 protein CCNA_03737</fullName>
    </recommendedName>
</protein>
<comment type="similarity">
    <text evidence="1">Belongs to the UPF0235 family.</text>
</comment>